<sequence length="152" mass="16976">MEIFKKKNRVIAYTDGACKGNPGIGGWGAILSYNGVDKEIYGSEKDTTNNRMELMAAIKTLQALKRKCDITIYTDSKYLQNGINEWLANWKANGWKTAAKKEVKNKDLWQELDSLTNKHNVTWGWVKGHSGNAGNEKADELANKAIAELIGK</sequence>
<keyword id="KW-0963">Cytoplasm</keyword>
<keyword id="KW-0255">Endonuclease</keyword>
<keyword id="KW-0378">Hydrolase</keyword>
<keyword id="KW-0460">Magnesium</keyword>
<keyword id="KW-0479">Metal-binding</keyword>
<keyword id="KW-0540">Nuclease</keyword>
<accession>A7NBM9</accession>
<gene>
    <name evidence="1" type="primary">rnhA</name>
    <name type="ordered locus">FTA_0906</name>
</gene>
<dbReference type="EC" id="3.1.26.4" evidence="1"/>
<dbReference type="EMBL" id="CP000803">
    <property type="protein sequence ID" value="ABU61382.1"/>
    <property type="molecule type" value="Genomic_DNA"/>
</dbReference>
<dbReference type="RefSeq" id="WP_003015471.1">
    <property type="nucleotide sequence ID" value="NC_009749.1"/>
</dbReference>
<dbReference type="SMR" id="A7NBM9"/>
<dbReference type="GeneID" id="75265176"/>
<dbReference type="KEGG" id="fta:FTA_0906"/>
<dbReference type="HOGENOM" id="CLU_030894_6_0_6"/>
<dbReference type="GO" id="GO:0005737">
    <property type="term" value="C:cytoplasm"/>
    <property type="evidence" value="ECO:0007669"/>
    <property type="project" value="UniProtKB-SubCell"/>
</dbReference>
<dbReference type="GO" id="GO:0000287">
    <property type="term" value="F:magnesium ion binding"/>
    <property type="evidence" value="ECO:0007669"/>
    <property type="project" value="UniProtKB-UniRule"/>
</dbReference>
<dbReference type="GO" id="GO:0003676">
    <property type="term" value="F:nucleic acid binding"/>
    <property type="evidence" value="ECO:0007669"/>
    <property type="project" value="InterPro"/>
</dbReference>
<dbReference type="GO" id="GO:0004523">
    <property type="term" value="F:RNA-DNA hybrid ribonuclease activity"/>
    <property type="evidence" value="ECO:0007669"/>
    <property type="project" value="UniProtKB-UniRule"/>
</dbReference>
<dbReference type="GO" id="GO:0043137">
    <property type="term" value="P:DNA replication, removal of RNA primer"/>
    <property type="evidence" value="ECO:0007669"/>
    <property type="project" value="TreeGrafter"/>
</dbReference>
<dbReference type="CDD" id="cd09278">
    <property type="entry name" value="RNase_HI_prokaryote_like"/>
    <property type="match status" value="1"/>
</dbReference>
<dbReference type="FunFam" id="3.30.420.10:FF:000089">
    <property type="entry name" value="Ribonuclease H"/>
    <property type="match status" value="1"/>
</dbReference>
<dbReference type="Gene3D" id="3.30.420.10">
    <property type="entry name" value="Ribonuclease H-like superfamily/Ribonuclease H"/>
    <property type="match status" value="1"/>
</dbReference>
<dbReference type="HAMAP" id="MF_00042">
    <property type="entry name" value="RNase_H"/>
    <property type="match status" value="1"/>
</dbReference>
<dbReference type="InterPro" id="IPR050092">
    <property type="entry name" value="RNase_H"/>
</dbReference>
<dbReference type="InterPro" id="IPR012337">
    <property type="entry name" value="RNaseH-like_sf"/>
</dbReference>
<dbReference type="InterPro" id="IPR002156">
    <property type="entry name" value="RNaseH_domain"/>
</dbReference>
<dbReference type="InterPro" id="IPR036397">
    <property type="entry name" value="RNaseH_sf"/>
</dbReference>
<dbReference type="InterPro" id="IPR022892">
    <property type="entry name" value="RNaseHI"/>
</dbReference>
<dbReference type="NCBIfam" id="NF001236">
    <property type="entry name" value="PRK00203.1"/>
    <property type="match status" value="1"/>
</dbReference>
<dbReference type="PANTHER" id="PTHR10642">
    <property type="entry name" value="RIBONUCLEASE H1"/>
    <property type="match status" value="1"/>
</dbReference>
<dbReference type="PANTHER" id="PTHR10642:SF26">
    <property type="entry name" value="RIBONUCLEASE H1"/>
    <property type="match status" value="1"/>
</dbReference>
<dbReference type="Pfam" id="PF00075">
    <property type="entry name" value="RNase_H"/>
    <property type="match status" value="1"/>
</dbReference>
<dbReference type="SUPFAM" id="SSF53098">
    <property type="entry name" value="Ribonuclease H-like"/>
    <property type="match status" value="1"/>
</dbReference>
<dbReference type="PROSITE" id="PS50879">
    <property type="entry name" value="RNASE_H_1"/>
    <property type="match status" value="1"/>
</dbReference>
<protein>
    <recommendedName>
        <fullName evidence="1">Ribonuclease H</fullName>
        <shortName evidence="1">RNase H</shortName>
        <ecNumber evidence="1">3.1.26.4</ecNumber>
    </recommendedName>
</protein>
<reference key="1">
    <citation type="journal article" date="2009" name="PLoS ONE">
        <title>Complete genome sequence of Francisella tularensis subspecies holarctica FTNF002-00.</title>
        <authorList>
            <person name="Barabote R.D."/>
            <person name="Xie G."/>
            <person name="Brettin T.S."/>
            <person name="Hinrichs S.H."/>
            <person name="Fey P.D."/>
            <person name="Jay J.J."/>
            <person name="Engle J.L."/>
            <person name="Godbole S.D."/>
            <person name="Noronha J.M."/>
            <person name="Scheuermann R.H."/>
            <person name="Zhou L.W."/>
            <person name="Lion C."/>
            <person name="Dempsey M.P."/>
        </authorList>
    </citation>
    <scope>NUCLEOTIDE SEQUENCE [LARGE SCALE GENOMIC DNA]</scope>
    <source>
        <strain>FTNF002-00 / FTA</strain>
    </source>
</reference>
<name>RNH_FRATF</name>
<organism>
    <name type="scientific">Francisella tularensis subsp. holarctica (strain FTNF002-00 / FTA)</name>
    <dbReference type="NCBI Taxonomy" id="458234"/>
    <lineage>
        <taxon>Bacteria</taxon>
        <taxon>Pseudomonadati</taxon>
        <taxon>Pseudomonadota</taxon>
        <taxon>Gammaproteobacteria</taxon>
        <taxon>Thiotrichales</taxon>
        <taxon>Francisellaceae</taxon>
        <taxon>Francisella</taxon>
    </lineage>
</organism>
<proteinExistence type="inferred from homology"/>
<feature type="chain" id="PRO_0000332598" description="Ribonuclease H">
    <location>
        <begin position="1"/>
        <end position="152"/>
    </location>
</feature>
<feature type="domain" description="RNase H type-1" evidence="2">
    <location>
        <begin position="6"/>
        <end position="147"/>
    </location>
</feature>
<feature type="binding site" evidence="1">
    <location>
        <position position="15"/>
    </location>
    <ligand>
        <name>Mg(2+)</name>
        <dbReference type="ChEBI" id="CHEBI:18420"/>
        <label>1</label>
    </ligand>
</feature>
<feature type="binding site" evidence="1">
    <location>
        <position position="15"/>
    </location>
    <ligand>
        <name>Mg(2+)</name>
        <dbReference type="ChEBI" id="CHEBI:18420"/>
        <label>2</label>
    </ligand>
</feature>
<feature type="binding site" evidence="1">
    <location>
        <position position="53"/>
    </location>
    <ligand>
        <name>Mg(2+)</name>
        <dbReference type="ChEBI" id="CHEBI:18420"/>
        <label>1</label>
    </ligand>
</feature>
<feature type="binding site" evidence="1">
    <location>
        <position position="75"/>
    </location>
    <ligand>
        <name>Mg(2+)</name>
        <dbReference type="ChEBI" id="CHEBI:18420"/>
        <label>1</label>
    </ligand>
</feature>
<feature type="binding site" evidence="1">
    <location>
        <position position="139"/>
    </location>
    <ligand>
        <name>Mg(2+)</name>
        <dbReference type="ChEBI" id="CHEBI:18420"/>
        <label>2</label>
    </ligand>
</feature>
<comment type="function">
    <text evidence="1">Endonuclease that specifically degrades the RNA of RNA-DNA hybrids.</text>
</comment>
<comment type="catalytic activity">
    <reaction evidence="1">
        <text>Endonucleolytic cleavage to 5'-phosphomonoester.</text>
        <dbReference type="EC" id="3.1.26.4"/>
    </reaction>
</comment>
<comment type="cofactor">
    <cofactor evidence="1">
        <name>Mg(2+)</name>
        <dbReference type="ChEBI" id="CHEBI:18420"/>
    </cofactor>
    <text evidence="1">Binds 1 Mg(2+) ion per subunit. May bind a second metal ion at a regulatory site, or after substrate binding.</text>
</comment>
<comment type="subunit">
    <text evidence="1">Monomer.</text>
</comment>
<comment type="subcellular location">
    <subcellularLocation>
        <location evidence="1">Cytoplasm</location>
    </subcellularLocation>
</comment>
<comment type="similarity">
    <text evidence="1">Belongs to the RNase H family.</text>
</comment>
<evidence type="ECO:0000255" key="1">
    <source>
        <dbReference type="HAMAP-Rule" id="MF_00042"/>
    </source>
</evidence>
<evidence type="ECO:0000255" key="2">
    <source>
        <dbReference type="PROSITE-ProRule" id="PRU00408"/>
    </source>
</evidence>